<comment type="function">
    <text evidence="1">Catalyzes the methylthiolation of N6-(dimethylallyl)adenosine (i(6)A), leading to the formation of 2-methylthio-N6-(dimethylallyl)adenosine (ms(2)i(6)A) at position 37 in tRNAs that read codons beginning with uridine.</text>
</comment>
<comment type="catalytic activity">
    <reaction evidence="1">
        <text>N(6)-dimethylallyladenosine(37) in tRNA + (sulfur carrier)-SH + AH2 + 2 S-adenosyl-L-methionine = 2-methylsulfanyl-N(6)-dimethylallyladenosine(37) in tRNA + (sulfur carrier)-H + 5'-deoxyadenosine + L-methionine + A + S-adenosyl-L-homocysteine + 2 H(+)</text>
        <dbReference type="Rhea" id="RHEA:37067"/>
        <dbReference type="Rhea" id="RHEA-COMP:10375"/>
        <dbReference type="Rhea" id="RHEA-COMP:10376"/>
        <dbReference type="Rhea" id="RHEA-COMP:14737"/>
        <dbReference type="Rhea" id="RHEA-COMP:14739"/>
        <dbReference type="ChEBI" id="CHEBI:13193"/>
        <dbReference type="ChEBI" id="CHEBI:15378"/>
        <dbReference type="ChEBI" id="CHEBI:17319"/>
        <dbReference type="ChEBI" id="CHEBI:17499"/>
        <dbReference type="ChEBI" id="CHEBI:29917"/>
        <dbReference type="ChEBI" id="CHEBI:57844"/>
        <dbReference type="ChEBI" id="CHEBI:57856"/>
        <dbReference type="ChEBI" id="CHEBI:59789"/>
        <dbReference type="ChEBI" id="CHEBI:64428"/>
        <dbReference type="ChEBI" id="CHEBI:74415"/>
        <dbReference type="ChEBI" id="CHEBI:74417"/>
        <dbReference type="EC" id="2.8.4.3"/>
    </reaction>
</comment>
<comment type="cofactor">
    <cofactor evidence="1">
        <name>[4Fe-4S] cluster</name>
        <dbReference type="ChEBI" id="CHEBI:49883"/>
    </cofactor>
    <text evidence="1">Binds 2 [4Fe-4S] clusters. One cluster is coordinated with 3 cysteines and an exchangeable S-adenosyl-L-methionine.</text>
</comment>
<comment type="subunit">
    <text evidence="1">Monomer.</text>
</comment>
<comment type="subcellular location">
    <subcellularLocation>
        <location evidence="1">Cytoplasm</location>
    </subcellularLocation>
</comment>
<comment type="similarity">
    <text evidence="1">Belongs to the methylthiotransferase family. MiaB subfamily.</text>
</comment>
<name>MIAB_FRATW</name>
<proteinExistence type="inferred from homology"/>
<gene>
    <name evidence="1" type="primary">miaB</name>
    <name type="ordered locus">FTW_1110</name>
</gene>
<feature type="chain" id="PRO_0000374310" description="tRNA-2-methylthio-N(6)-dimethylallyladenosine synthase">
    <location>
        <begin position="1"/>
        <end position="442"/>
    </location>
</feature>
<feature type="domain" description="MTTase N-terminal" evidence="1">
    <location>
        <begin position="5"/>
        <end position="122"/>
    </location>
</feature>
<feature type="domain" description="Radical SAM core" evidence="2">
    <location>
        <begin position="145"/>
        <end position="378"/>
    </location>
</feature>
<feature type="domain" description="TRAM" evidence="1">
    <location>
        <begin position="380"/>
        <end position="442"/>
    </location>
</feature>
<feature type="binding site" evidence="1">
    <location>
        <position position="14"/>
    </location>
    <ligand>
        <name>[4Fe-4S] cluster</name>
        <dbReference type="ChEBI" id="CHEBI:49883"/>
        <label>1</label>
    </ligand>
</feature>
<feature type="binding site" evidence="1">
    <location>
        <position position="51"/>
    </location>
    <ligand>
        <name>[4Fe-4S] cluster</name>
        <dbReference type="ChEBI" id="CHEBI:49883"/>
        <label>1</label>
    </ligand>
</feature>
<feature type="binding site" evidence="1">
    <location>
        <position position="85"/>
    </location>
    <ligand>
        <name>[4Fe-4S] cluster</name>
        <dbReference type="ChEBI" id="CHEBI:49883"/>
        <label>1</label>
    </ligand>
</feature>
<feature type="binding site" evidence="1">
    <location>
        <position position="159"/>
    </location>
    <ligand>
        <name>[4Fe-4S] cluster</name>
        <dbReference type="ChEBI" id="CHEBI:49883"/>
        <label>2</label>
        <note>4Fe-4S-S-AdoMet</note>
    </ligand>
</feature>
<feature type="binding site" evidence="1">
    <location>
        <position position="163"/>
    </location>
    <ligand>
        <name>[4Fe-4S] cluster</name>
        <dbReference type="ChEBI" id="CHEBI:49883"/>
        <label>2</label>
        <note>4Fe-4S-S-AdoMet</note>
    </ligand>
</feature>
<feature type="binding site" evidence="1">
    <location>
        <position position="166"/>
    </location>
    <ligand>
        <name>[4Fe-4S] cluster</name>
        <dbReference type="ChEBI" id="CHEBI:49883"/>
        <label>2</label>
        <note>4Fe-4S-S-AdoMet</note>
    </ligand>
</feature>
<organism>
    <name type="scientific">Francisella tularensis subsp. tularensis (strain WY96-3418)</name>
    <dbReference type="NCBI Taxonomy" id="418136"/>
    <lineage>
        <taxon>Bacteria</taxon>
        <taxon>Pseudomonadati</taxon>
        <taxon>Pseudomonadota</taxon>
        <taxon>Gammaproteobacteria</taxon>
        <taxon>Thiotrichales</taxon>
        <taxon>Francisellaceae</taxon>
        <taxon>Francisella</taxon>
    </lineage>
</organism>
<keyword id="KW-0004">4Fe-4S</keyword>
<keyword id="KW-0963">Cytoplasm</keyword>
<keyword id="KW-0408">Iron</keyword>
<keyword id="KW-0411">Iron-sulfur</keyword>
<keyword id="KW-0479">Metal-binding</keyword>
<keyword id="KW-0949">S-adenosyl-L-methionine</keyword>
<keyword id="KW-0808">Transferase</keyword>
<keyword id="KW-0819">tRNA processing</keyword>
<evidence type="ECO:0000255" key="1">
    <source>
        <dbReference type="HAMAP-Rule" id="MF_01864"/>
    </source>
</evidence>
<evidence type="ECO:0000255" key="2">
    <source>
        <dbReference type="PROSITE-ProRule" id="PRU01266"/>
    </source>
</evidence>
<sequence>MKEQKKVFIKTLGCQMNEYDSARMHEVLNEHFDTVKTDDYKDADIILINTCSIREKAQEKVFHELGRWKGLKKTNEDLIIGVGGCVASQEGENIIKRAPFVDLVFGPQTIHRLPEMIKQKQKTQQSQVDISFPEVEKFDYLPEPKAEGAKAYVSIMEGCDKYCSYCVVPYTRGPEVNRPFEDVLAECAILAEQGVKEITLLGQNVNHYLGPMENGQTADLALLIHFIAEIDGIERIRFTTSHPVEFSQNLIDAYATVPELANHLHLPVQHGSDRILINMKRNHTILEFKQKIRKLRAIRPDITISSDFIVGFPGETEEDFQKLLDLVKEINFDQSFSFIYSKRPGTPAADLPDDTPMEVKKDRLKRLQDLLNSNAQIISRQMVGTNQRILVDGTSKKDDNILSGRTENNRVVNFKGDKSLIGQFAMVKITESLPNSLRGELI</sequence>
<protein>
    <recommendedName>
        <fullName evidence="1">tRNA-2-methylthio-N(6)-dimethylallyladenosine synthase</fullName>
        <ecNumber evidence="1">2.8.4.3</ecNumber>
    </recommendedName>
    <alternativeName>
        <fullName evidence="1">(Dimethylallyl)adenosine tRNA methylthiotransferase MiaB</fullName>
    </alternativeName>
    <alternativeName>
        <fullName evidence="1">tRNA-i(6)A37 methylthiotransferase</fullName>
    </alternativeName>
</protein>
<dbReference type="EC" id="2.8.4.3" evidence="1"/>
<dbReference type="EMBL" id="CP000608">
    <property type="protein sequence ID" value="ABO46922.1"/>
    <property type="molecule type" value="Genomic_DNA"/>
</dbReference>
<dbReference type="RefSeq" id="WP_003023392.1">
    <property type="nucleotide sequence ID" value="NC_009257.1"/>
</dbReference>
<dbReference type="SMR" id="A4IYC1"/>
<dbReference type="GeneID" id="75265204"/>
<dbReference type="KEGG" id="ftw:FTW_1110"/>
<dbReference type="HOGENOM" id="CLU_018697_2_0_6"/>
<dbReference type="GO" id="GO:0005829">
    <property type="term" value="C:cytosol"/>
    <property type="evidence" value="ECO:0007669"/>
    <property type="project" value="TreeGrafter"/>
</dbReference>
<dbReference type="GO" id="GO:0051539">
    <property type="term" value="F:4 iron, 4 sulfur cluster binding"/>
    <property type="evidence" value="ECO:0007669"/>
    <property type="project" value="UniProtKB-UniRule"/>
</dbReference>
<dbReference type="GO" id="GO:0046872">
    <property type="term" value="F:metal ion binding"/>
    <property type="evidence" value="ECO:0007669"/>
    <property type="project" value="UniProtKB-KW"/>
</dbReference>
<dbReference type="GO" id="GO:0035597">
    <property type="term" value="F:N6-isopentenyladenosine methylthiotransferase activity"/>
    <property type="evidence" value="ECO:0007669"/>
    <property type="project" value="TreeGrafter"/>
</dbReference>
<dbReference type="CDD" id="cd01335">
    <property type="entry name" value="Radical_SAM"/>
    <property type="match status" value="1"/>
</dbReference>
<dbReference type="FunFam" id="3.40.50.12160:FF:000001">
    <property type="entry name" value="tRNA-2-methylthio-N(6)-dimethylallyladenosine synthase"/>
    <property type="match status" value="1"/>
</dbReference>
<dbReference type="FunFam" id="3.80.30.20:FF:000001">
    <property type="entry name" value="tRNA-2-methylthio-N(6)-dimethylallyladenosine synthase 2"/>
    <property type="match status" value="1"/>
</dbReference>
<dbReference type="Gene3D" id="3.40.50.12160">
    <property type="entry name" value="Methylthiotransferase, N-terminal domain"/>
    <property type="match status" value="1"/>
</dbReference>
<dbReference type="Gene3D" id="3.80.30.20">
    <property type="entry name" value="tm_1862 like domain"/>
    <property type="match status" value="1"/>
</dbReference>
<dbReference type="HAMAP" id="MF_01864">
    <property type="entry name" value="tRNA_metthiotr_MiaB"/>
    <property type="match status" value="1"/>
</dbReference>
<dbReference type="InterPro" id="IPR006638">
    <property type="entry name" value="Elp3/MiaA/NifB-like_rSAM"/>
</dbReference>
<dbReference type="InterPro" id="IPR005839">
    <property type="entry name" value="Methylthiotransferase"/>
</dbReference>
<dbReference type="InterPro" id="IPR020612">
    <property type="entry name" value="Methylthiotransferase_CS"/>
</dbReference>
<dbReference type="InterPro" id="IPR013848">
    <property type="entry name" value="Methylthiotransferase_N"/>
</dbReference>
<dbReference type="InterPro" id="IPR038135">
    <property type="entry name" value="Methylthiotransferase_N_sf"/>
</dbReference>
<dbReference type="InterPro" id="IPR006463">
    <property type="entry name" value="MiaB_methiolase"/>
</dbReference>
<dbReference type="InterPro" id="IPR007197">
    <property type="entry name" value="rSAM"/>
</dbReference>
<dbReference type="InterPro" id="IPR023404">
    <property type="entry name" value="rSAM_horseshoe"/>
</dbReference>
<dbReference type="InterPro" id="IPR002792">
    <property type="entry name" value="TRAM_dom"/>
</dbReference>
<dbReference type="NCBIfam" id="TIGR01574">
    <property type="entry name" value="miaB-methiolase"/>
    <property type="match status" value="1"/>
</dbReference>
<dbReference type="NCBIfam" id="TIGR00089">
    <property type="entry name" value="MiaB/RimO family radical SAM methylthiotransferase"/>
    <property type="match status" value="1"/>
</dbReference>
<dbReference type="PANTHER" id="PTHR43020">
    <property type="entry name" value="CDK5 REGULATORY SUBUNIT-ASSOCIATED PROTEIN 1"/>
    <property type="match status" value="1"/>
</dbReference>
<dbReference type="PANTHER" id="PTHR43020:SF2">
    <property type="entry name" value="MITOCHONDRIAL TRNA METHYLTHIOTRANSFERASE CDK5RAP1"/>
    <property type="match status" value="1"/>
</dbReference>
<dbReference type="Pfam" id="PF04055">
    <property type="entry name" value="Radical_SAM"/>
    <property type="match status" value="1"/>
</dbReference>
<dbReference type="Pfam" id="PF01938">
    <property type="entry name" value="TRAM"/>
    <property type="match status" value="1"/>
</dbReference>
<dbReference type="Pfam" id="PF00919">
    <property type="entry name" value="UPF0004"/>
    <property type="match status" value="1"/>
</dbReference>
<dbReference type="SFLD" id="SFLDF00273">
    <property type="entry name" value="(dimethylallyl)adenosine_tRNA"/>
    <property type="match status" value="1"/>
</dbReference>
<dbReference type="SFLD" id="SFLDG01082">
    <property type="entry name" value="B12-binding_domain_containing"/>
    <property type="match status" value="1"/>
</dbReference>
<dbReference type="SFLD" id="SFLDS00029">
    <property type="entry name" value="Radical_SAM"/>
    <property type="match status" value="1"/>
</dbReference>
<dbReference type="SMART" id="SM00729">
    <property type="entry name" value="Elp3"/>
    <property type="match status" value="1"/>
</dbReference>
<dbReference type="SUPFAM" id="SSF102114">
    <property type="entry name" value="Radical SAM enzymes"/>
    <property type="match status" value="1"/>
</dbReference>
<dbReference type="PROSITE" id="PS51449">
    <property type="entry name" value="MTTASE_N"/>
    <property type="match status" value="1"/>
</dbReference>
<dbReference type="PROSITE" id="PS01278">
    <property type="entry name" value="MTTASE_RADICAL"/>
    <property type="match status" value="1"/>
</dbReference>
<dbReference type="PROSITE" id="PS51918">
    <property type="entry name" value="RADICAL_SAM"/>
    <property type="match status" value="1"/>
</dbReference>
<dbReference type="PROSITE" id="PS50926">
    <property type="entry name" value="TRAM"/>
    <property type="match status" value="1"/>
</dbReference>
<accession>A4IYC1</accession>
<reference key="1">
    <citation type="journal article" date="2007" name="PLoS ONE">
        <title>Complete genomic characterization of a pathogenic A.II strain of Francisella tularensis subspecies tularensis.</title>
        <authorList>
            <person name="Beckstrom-Sternberg S.M."/>
            <person name="Auerbach R.K."/>
            <person name="Godbole S."/>
            <person name="Pearson J.V."/>
            <person name="Beckstrom-Sternberg J.S."/>
            <person name="Deng Z."/>
            <person name="Munk C."/>
            <person name="Kubota K."/>
            <person name="Zhou Y."/>
            <person name="Bruce D."/>
            <person name="Noronha J."/>
            <person name="Scheuermann R.H."/>
            <person name="Wang A."/>
            <person name="Wei X."/>
            <person name="Wang J."/>
            <person name="Hao J."/>
            <person name="Wagner D.M."/>
            <person name="Brettin T.S."/>
            <person name="Brown N."/>
            <person name="Gilna P."/>
            <person name="Keim P.S."/>
        </authorList>
    </citation>
    <scope>NUCLEOTIDE SEQUENCE [LARGE SCALE GENOMIC DNA]</scope>
    <source>
        <strain>WY96-3418</strain>
    </source>
</reference>